<organism>
    <name type="scientific">Armillaria mellea</name>
    <name type="common">Honey mushroom</name>
    <name type="synonym">Agaricus melleus</name>
    <dbReference type="NCBI Taxonomy" id="47429"/>
    <lineage>
        <taxon>Eukaryota</taxon>
        <taxon>Fungi</taxon>
        <taxon>Dikarya</taxon>
        <taxon>Basidiomycota</taxon>
        <taxon>Agaricomycotina</taxon>
        <taxon>Agaricomycetes</taxon>
        <taxon>Agaricomycetidae</taxon>
        <taxon>Agaricales</taxon>
        <taxon>Marasmiineae</taxon>
        <taxon>Physalacriaceae</taxon>
        <taxon>Armillaria</taxon>
    </lineage>
</organism>
<comment type="function">
    <text evidence="5">Flavin-dependent halogenase involved in the biosynthesis of melleolides, a range of antifungal and phytotoxic polyketide derivatives composed of an orsellinic acid (OA) moiety esterified to various sesquiterpene alcohols. The halogenase catalyzes the transfer of a single chlorine atom to the melleolide backbone, resulting in a 6'-chloromelleolide product. The enzyme acts on free substrate and does not depend on carrier-protein-dependent acceptor molecules. Can also catalyze the transfer of a single bromine atom to the melleolide backbone in vitro.</text>
</comment>
<comment type="catalytic activity">
    <reaction evidence="5">
        <text>melleolide F + FADH2 + chloride + O2 = 6'-chloromelleolide F + FAD + 2 H2O + H(+)</text>
        <dbReference type="Rhea" id="RHEA:67160"/>
        <dbReference type="ChEBI" id="CHEBI:15377"/>
        <dbReference type="ChEBI" id="CHEBI:15378"/>
        <dbReference type="ChEBI" id="CHEBI:15379"/>
        <dbReference type="ChEBI" id="CHEBI:17996"/>
        <dbReference type="ChEBI" id="CHEBI:57692"/>
        <dbReference type="ChEBI" id="CHEBI:58307"/>
        <dbReference type="ChEBI" id="CHEBI:167712"/>
        <dbReference type="ChEBI" id="CHEBI:167713"/>
    </reaction>
    <physiologicalReaction direction="left-to-right" evidence="5">
        <dbReference type="Rhea" id="RHEA:67161"/>
    </physiologicalReaction>
</comment>
<comment type="catalytic activity">
    <reaction evidence="5">
        <text>melleolide F + bromide + FADH2 + O2 = 6'-bromomelleolide F + FAD + 2 H2O</text>
        <dbReference type="Rhea" id="RHEA:67164"/>
        <dbReference type="ChEBI" id="CHEBI:15377"/>
        <dbReference type="ChEBI" id="CHEBI:15379"/>
        <dbReference type="ChEBI" id="CHEBI:15858"/>
        <dbReference type="ChEBI" id="CHEBI:57692"/>
        <dbReference type="ChEBI" id="CHEBI:58307"/>
        <dbReference type="ChEBI" id="CHEBI:167712"/>
        <dbReference type="ChEBI" id="CHEBI:167714"/>
    </reaction>
    <physiologicalReaction direction="left-to-right" evidence="5">
        <dbReference type="Rhea" id="RHEA:67165"/>
    </physiologicalReaction>
</comment>
<comment type="biotechnology">
    <text evidence="2 3 4 6 7 8">Melleolide sesquiterpene aryl esters are cytotoxic secondary products with anti-cancer potential (PubMed:21376582, PubMed:26952552). Armillaridin shows therapeutic and radiosensitizing effects on human esophageal cancer cells (PubMed:23864890). Armillaridin induces autophagy-associated cell death in human chronic myelogenous leukemia as well as of hepatocellular carcinoma cells (PubMed:27592257, PubMed:31488037). Armillaridin can also inhibit the differentiation and activation of human macrophages and thus might have potential to be developed as a biological response modifier for inflammatory diseases (PubMed:25746621).</text>
</comment>
<comment type="miscellaneous">
    <text evidence="9 12">Armillaria species are both devastating forest pathogens and some of the largest and oldest terrestrial organisms on Earth (Probable) (PubMed:31746694). They forage for hosts and achieve immense colony sizes via rhizomorphs, root-like multicellular structures of clonal dispersal (Probable).</text>
</comment>
<comment type="similarity">
    <text evidence="11">Belongs to the flavin-dependent halogenase family.</text>
</comment>
<gene>
    <name evidence="10" type="primary">armH4</name>
</gene>
<accession>A0A0U3AL34</accession>
<protein>
    <recommendedName>
        <fullName evidence="10">Flavin-dependent halogenase armH4</fullName>
        <ecNumber evidence="5">1.14.19.-</ecNumber>
    </recommendedName>
    <alternativeName>
        <fullName evidence="10">ArmH4</fullName>
    </alternativeName>
</protein>
<evidence type="ECO:0000250" key="1">
    <source>
        <dbReference type="UniProtKB" id="P95480"/>
    </source>
</evidence>
<evidence type="ECO:0000269" key="2">
    <source>
    </source>
</evidence>
<evidence type="ECO:0000269" key="3">
    <source>
    </source>
</evidence>
<evidence type="ECO:0000269" key="4">
    <source>
    </source>
</evidence>
<evidence type="ECO:0000269" key="5">
    <source>
    </source>
</evidence>
<evidence type="ECO:0000269" key="6">
    <source>
    </source>
</evidence>
<evidence type="ECO:0000269" key="7">
    <source>
    </source>
</evidence>
<evidence type="ECO:0000269" key="8">
    <source>
    </source>
</evidence>
<evidence type="ECO:0000269" key="9">
    <source>
    </source>
</evidence>
<evidence type="ECO:0000303" key="10">
    <source>
    </source>
</evidence>
<evidence type="ECO:0000305" key="11"/>
<evidence type="ECO:0000305" key="12">
    <source>
    </source>
</evidence>
<sequence length="533" mass="58086">MSSLLPPHAQILVVGGGPAGSYCASILAREGFSVVVLEATTFPRYHIGESMLPSVRPFLKFSGADNKIASHGFCPKPGAAVKFQQHKREGYTDFSTLSSGNSPDNAAAWNVKRSEFDEILLRHAEELGAQVFENHRVINLIFADNNVSEGRPISAEFSCPNGELRSISFDYLVDASGRAGIMSTKYLKNRKFNNTLRNVASWGYWTGAKRYMPGSERDNAPFFEALTDGSGWAWFIPLHDSTVSVGIVTDQASSTARKALSARNGMHCSSKADYLAQLKLAPTVSGKFLCKATLQGENSPTCIRSASDFSYAADRYSGDHFRLIGDASAFIDPFFSSGVHLALLGALTAAASISASIRKTCSELRAAQFHDKKVAIAYTRFLLVVMGVYKQIRNQDLHILAEVDEDNFDRAFDILRPVIQGTADVGKTVSEDELQKTMDFCKDIFAPTDPQMHEAVGARLGPELCSPSVPIMTDSEIEDLTKDDNEAKLVLKEINARKAVHTMYGGPIHVAAESIDGLVLNLEVGNFGLKNVH</sequence>
<dbReference type="EC" id="1.14.19.-" evidence="5"/>
<dbReference type="EMBL" id="KT819180">
    <property type="protein sequence ID" value="ALT31851.1"/>
    <property type="molecule type" value="mRNA"/>
</dbReference>
<dbReference type="SMR" id="A0A0U3AL34"/>
<dbReference type="GO" id="GO:0140907">
    <property type="term" value="F:flavin-dependent halogenase activity"/>
    <property type="evidence" value="ECO:0000314"/>
    <property type="project" value="GO_Central"/>
</dbReference>
<dbReference type="GO" id="GO:0004497">
    <property type="term" value="F:monooxygenase activity"/>
    <property type="evidence" value="ECO:0007669"/>
    <property type="project" value="UniProtKB-KW"/>
</dbReference>
<dbReference type="GO" id="GO:0044550">
    <property type="term" value="P:secondary metabolite biosynthetic process"/>
    <property type="evidence" value="ECO:0000314"/>
    <property type="project" value="GO_Central"/>
</dbReference>
<dbReference type="Gene3D" id="3.50.50.60">
    <property type="entry name" value="FAD/NAD(P)-binding domain"/>
    <property type="match status" value="1"/>
</dbReference>
<dbReference type="InterPro" id="IPR036188">
    <property type="entry name" value="FAD/NAD-bd_sf"/>
</dbReference>
<dbReference type="InterPro" id="IPR050816">
    <property type="entry name" value="Flavin-dep_Halogenase_NPB"/>
</dbReference>
<dbReference type="InterPro" id="IPR006905">
    <property type="entry name" value="Flavin_halogenase"/>
</dbReference>
<dbReference type="PANTHER" id="PTHR43747:SF5">
    <property type="entry name" value="FAD-BINDING DOMAIN-CONTAINING PROTEIN"/>
    <property type="match status" value="1"/>
</dbReference>
<dbReference type="PANTHER" id="PTHR43747">
    <property type="entry name" value="FAD-BINDING PROTEIN"/>
    <property type="match status" value="1"/>
</dbReference>
<dbReference type="Pfam" id="PF04820">
    <property type="entry name" value="Trp_halogenase"/>
    <property type="match status" value="2"/>
</dbReference>
<dbReference type="PRINTS" id="PR00419">
    <property type="entry name" value="ADXRDTASE"/>
</dbReference>
<dbReference type="SUPFAM" id="SSF51905">
    <property type="entry name" value="FAD/NAD(P)-binding domain"/>
    <property type="match status" value="1"/>
</dbReference>
<keyword id="KW-0274">FAD</keyword>
<keyword id="KW-0285">Flavoprotein</keyword>
<keyword id="KW-0503">Monooxygenase</keyword>
<keyword id="KW-0560">Oxidoreductase</keyword>
<proteinExistence type="evidence at protein level"/>
<feature type="chain" id="PRO_0000442633" description="Flavin-dependent halogenase armH4">
    <location>
        <begin position="1"/>
        <end position="533"/>
    </location>
</feature>
<feature type="binding site" evidence="1">
    <location>
        <position position="16"/>
    </location>
    <ligand>
        <name>FAD</name>
        <dbReference type="ChEBI" id="CHEBI:57692"/>
    </ligand>
</feature>
<feature type="binding site" evidence="1">
    <location>
        <position position="19"/>
    </location>
    <ligand>
        <name>FAD</name>
        <dbReference type="ChEBI" id="CHEBI:57692"/>
    </ligand>
</feature>
<feature type="binding site" evidence="1">
    <location>
        <position position="49"/>
    </location>
    <ligand>
        <name>FAD</name>
        <dbReference type="ChEBI" id="CHEBI:57692"/>
    </ligand>
</feature>
<feature type="binding site" evidence="1">
    <location>
        <position position="337"/>
    </location>
    <ligand>
        <name>chloride</name>
        <dbReference type="ChEBI" id="CHEBI:17996"/>
    </ligand>
</feature>
<feature type="binding site" evidence="1">
    <location>
        <position position="338"/>
    </location>
    <ligand>
        <name>chloride</name>
        <dbReference type="ChEBI" id="CHEBI:17996"/>
    </ligand>
</feature>
<feature type="binding site" evidence="1">
    <location>
        <position position="339"/>
    </location>
    <ligand>
        <name>FAD</name>
        <dbReference type="ChEBI" id="CHEBI:57692"/>
    </ligand>
</feature>
<reference key="1">
    <citation type="journal article" date="2015" name="Appl. Environ. Microbiol.">
        <title>A fivefold parallelized biosynthetic process secures chlorination of Armillaria mellea (honey mushroom) toxins.</title>
        <authorList>
            <person name="Wick J."/>
            <person name="Heine D."/>
            <person name="Lackner G."/>
            <person name="Misiek M."/>
            <person name="Tauber J."/>
            <person name="Jagusch H."/>
            <person name="Hertweck C."/>
            <person name="Hoffmeister D."/>
        </authorList>
    </citation>
    <scope>NUCLEOTIDE SEQUENCE [MRNA]</scope>
    <scope>FUNCTION</scope>
    <scope>CATALYTIC ACTIVITY</scope>
    <source>
        <strain>DSM 3731</strain>
    </source>
</reference>
<reference key="2">
    <citation type="journal article" date="2011" name="Bioorg. Med. Chem. Lett.">
        <title>In vitro cytotoxicity of melleolide antibiotics: structural and mechanistic aspects.</title>
        <authorList>
            <person name="Bohnert M."/>
            <person name="Miethbauer S."/>
            <person name="Dahse H.M."/>
            <person name="Ziemen J."/>
            <person name="Nett M."/>
            <person name="Hoffmeister D."/>
        </authorList>
    </citation>
    <scope>BIOTECHNOLOGY</scope>
</reference>
<reference key="3">
    <citation type="journal article" date="2013" name="Evid. Based Complement Alternat. Med.">
        <title>Therapeutic and radiosensitizing effects of armillaridin on human esophageal cancer cells.</title>
        <authorList>
            <person name="Chi C.W."/>
            <person name="Chen C.C."/>
            <person name="Chen Y.J."/>
        </authorList>
    </citation>
    <scope>BIOTECHNOLOGY</scope>
</reference>
<reference key="4">
    <citation type="journal article" date="2015" name="Int. J. Med. Mushrooms">
        <title>Armillaridin, a honey medicinal mushroom, Armillaria mellea (higher basidiomycetes) component, inhibits differentiation and activation of human macrophages.</title>
        <authorList>
            <person name="Liu T.P."/>
            <person name="Chen C.C."/>
            <person name="Shiao P.Y."/>
            <person name="Shieh H.R."/>
            <person name="Chen Y.Y."/>
            <person name="Chen Y.J."/>
        </authorList>
    </citation>
    <scope>BIOTECHNOLOGY</scope>
</reference>
<reference key="5">
    <citation type="journal article" date="2016" name="J. Ethnopharmacol.">
        <title>Structure, cytotoxic activity and mechanism of protoilludane sesquiterpene aryl esters from the mycelium of Armillaria mellea.</title>
        <authorList>
            <person name="Li Z."/>
            <person name="Wang Y."/>
            <person name="Jiang B."/>
            <person name="Li W."/>
            <person name="Zheng L."/>
            <person name="Yang X."/>
            <person name="Bao Y."/>
            <person name="Sun L."/>
            <person name="Huang Y."/>
            <person name="Li Y."/>
        </authorList>
    </citation>
    <scope>BIOTECHNOLOGY</scope>
</reference>
<reference key="6">
    <citation type="journal article" date="2016" name="Tumor Biol.">
        <title>Armillaridin induces autophagy-associated cell death in human chronic myelogenous leukemia K562 cells.</title>
        <authorList>
            <person name="Chang W.H."/>
            <person name="Huang H.L."/>
            <person name="Huang W.P."/>
            <person name="Chen C.C."/>
            <person name="Chen Y.J."/>
        </authorList>
    </citation>
    <scope>BIOTECHNOLOGY</scope>
</reference>
<reference key="7">
    <citation type="journal article" date="2018" name="Curr. Biol.">
        <title>Armillaria.</title>
        <authorList>
            <person name="Sipos G."/>
            <person name="Anderson J.B."/>
            <person name="Nagy L.G."/>
        </authorList>
    </citation>
    <scope>MISCELLANEOUS</scope>
</reference>
<reference key="8">
    <citation type="journal article" date="2019" name="Am. J. Chin. Med.">
        <title>Induction of autophagic death of human hepatocellular carcinoma cells by armillaridin from Armillaria mellea.</title>
        <authorList>
            <person name="Leu Y.S."/>
            <person name="Chen Y.J."/>
            <person name="Chen C.C."/>
            <person name="Huang H.L."/>
        </authorList>
    </citation>
    <scope>BIOTECHNOLOGY</scope>
</reference>
<reference key="9">
    <citation type="journal article" date="2020" name="Plant Dis.">
        <title>Susceptibility of garden trees and shrubs to Armillaria root rot.</title>
        <authorList>
            <person name="Cromey M.G."/>
            <person name="Drakulic J."/>
            <person name="Beal E.J."/>
            <person name="Waghorn I.A.G."/>
            <person name="Perry J.N."/>
            <person name="Clover G.R.G."/>
        </authorList>
    </citation>
    <scope>MISCELLANEOUS</scope>
</reference>
<name>ARMH4_ARMME</name>